<comment type="function">
    <text evidence="2">Participates actively in the response to hyperosmotic and heat shock by preventing the aggregation of stress-denatured proteins and by disaggregating proteins, also in an autonomous, DnaK-independent fashion. Unfolded proteins bind initially to DnaJ; upon interaction with the DnaJ-bound protein, DnaK hydrolyzes its bound ATP, resulting in the formation of a stable complex. GrpE releases ADP from DnaK; ATP binding to DnaK triggers the release of the substrate protein, thus completing the reaction cycle. Several rounds of ATP-dependent interactions between DnaJ, DnaK and GrpE are required for fully efficient folding. Also involved, together with DnaK and GrpE, in the DNA replication of plasmids through activation of initiation proteins.</text>
</comment>
<comment type="cofactor">
    <cofactor evidence="2">
        <name>Zn(2+)</name>
        <dbReference type="ChEBI" id="CHEBI:29105"/>
    </cofactor>
    <text evidence="2">Binds 2 Zn(2+) ions per monomer.</text>
</comment>
<comment type="subunit">
    <text evidence="2">Homodimer.</text>
</comment>
<comment type="subcellular location">
    <subcellularLocation>
        <location evidence="2">Cytoplasm</location>
    </subcellularLocation>
</comment>
<comment type="induction">
    <text evidence="1">By heat shock.</text>
</comment>
<comment type="domain">
    <text evidence="2">The J domain is necessary and sufficient to stimulate DnaK ATPase activity. Zinc center 1 plays an important role in the autonomous, DnaK-independent chaperone activity of DnaJ. Zinc center 2 is essential for interaction with DnaK and for DnaJ activity.</text>
</comment>
<comment type="similarity">
    <text evidence="2">Belongs to the DnaJ family.</text>
</comment>
<protein>
    <recommendedName>
        <fullName evidence="2">Chaperone protein DnaJ</fullName>
    </recommendedName>
</protein>
<reference key="1">
    <citation type="journal article" date="2002" name="Proc. Natl. Acad. Sci. U.S.A.">
        <title>Extensive mosaic structure revealed by the complete genome sequence of uropathogenic Escherichia coli.</title>
        <authorList>
            <person name="Welch R.A."/>
            <person name="Burland V."/>
            <person name="Plunkett G. III"/>
            <person name="Redford P."/>
            <person name="Roesch P."/>
            <person name="Rasko D."/>
            <person name="Buckles E.L."/>
            <person name="Liou S.-R."/>
            <person name="Boutin A."/>
            <person name="Hackett J."/>
            <person name="Stroud D."/>
            <person name="Mayhew G.F."/>
            <person name="Rose D.J."/>
            <person name="Zhou S."/>
            <person name="Schwartz D.C."/>
            <person name="Perna N.T."/>
            <person name="Mobley H.L.T."/>
            <person name="Donnenberg M.S."/>
            <person name="Blattner F.R."/>
        </authorList>
    </citation>
    <scope>NUCLEOTIDE SEQUENCE [LARGE SCALE GENOMIC DNA]</scope>
    <source>
        <strain>CFT073 / ATCC 700928 / UPEC</strain>
    </source>
</reference>
<evidence type="ECO:0000250" key="1"/>
<evidence type="ECO:0000255" key="2">
    <source>
        <dbReference type="HAMAP-Rule" id="MF_01152"/>
    </source>
</evidence>
<organism>
    <name type="scientific">Escherichia coli O6:H1 (strain CFT073 / ATCC 700928 / UPEC)</name>
    <dbReference type="NCBI Taxonomy" id="199310"/>
    <lineage>
        <taxon>Bacteria</taxon>
        <taxon>Pseudomonadati</taxon>
        <taxon>Pseudomonadota</taxon>
        <taxon>Gammaproteobacteria</taxon>
        <taxon>Enterobacterales</taxon>
        <taxon>Enterobacteriaceae</taxon>
        <taxon>Escherichia</taxon>
    </lineage>
</organism>
<sequence>MAKQDYYEILGVSKTAEEREIKKAYKRLAMKYHPDRNQGDKEAEAKFKEIKEAYEVLTDSQKRAAYDQYGHAAFEQGGMGGGGFGGGADFSDIFGDVFGDIFGGGRGRQRAARGADLRYNMELTLEEAVRGVTKEIRIPTLEECDVCHGSGAKPGTQPQTCPTCHGSGQVQMRQGFFAVQQTCPHCQGRGTLIKDPCNKCHGHGRVERSKTLSVKIPAGVDTGDRIRLAGEGEAGEHGAPAGDLYVQVQVKQHPIFEREGNNLYCEVPINFAMAALGGEIEVPTLDGRVKLKVPGETQTGKLFRMRGKGVKSVRGGAQGDLLCRVVVETPVGLNEKQKQLLQELQESFGGPTGEHNSPRSKSFFDGVKKFFDDLTR</sequence>
<name>DNAJ_ECOL6</name>
<accession>Q8FLC5</accession>
<feature type="initiator methionine" description="Removed" evidence="1">
    <location>
        <position position="1"/>
    </location>
</feature>
<feature type="chain" id="PRO_0000070779" description="Chaperone protein DnaJ">
    <location>
        <begin position="2"/>
        <end position="376"/>
    </location>
</feature>
<feature type="domain" description="J" evidence="2">
    <location>
        <begin position="5"/>
        <end position="70"/>
    </location>
</feature>
<feature type="repeat" description="CXXCXGXG motif">
    <location>
        <begin position="144"/>
        <end position="151"/>
    </location>
</feature>
<feature type="repeat" description="CXXCXGXG motif">
    <location>
        <begin position="161"/>
        <end position="168"/>
    </location>
</feature>
<feature type="repeat" description="CXXCXGXG motif">
    <location>
        <begin position="183"/>
        <end position="190"/>
    </location>
</feature>
<feature type="repeat" description="CXXCXGXG motif">
    <location>
        <begin position="197"/>
        <end position="204"/>
    </location>
</feature>
<feature type="zinc finger region" description="CR-type" evidence="2">
    <location>
        <begin position="131"/>
        <end position="209"/>
    </location>
</feature>
<feature type="binding site" evidence="2">
    <location>
        <position position="144"/>
    </location>
    <ligand>
        <name>Zn(2+)</name>
        <dbReference type="ChEBI" id="CHEBI:29105"/>
        <label>1</label>
    </ligand>
</feature>
<feature type="binding site" evidence="2">
    <location>
        <position position="147"/>
    </location>
    <ligand>
        <name>Zn(2+)</name>
        <dbReference type="ChEBI" id="CHEBI:29105"/>
        <label>1</label>
    </ligand>
</feature>
<feature type="binding site" evidence="2">
    <location>
        <position position="161"/>
    </location>
    <ligand>
        <name>Zn(2+)</name>
        <dbReference type="ChEBI" id="CHEBI:29105"/>
        <label>2</label>
    </ligand>
</feature>
<feature type="binding site" evidence="2">
    <location>
        <position position="164"/>
    </location>
    <ligand>
        <name>Zn(2+)</name>
        <dbReference type="ChEBI" id="CHEBI:29105"/>
        <label>2</label>
    </ligand>
</feature>
<feature type="binding site" evidence="2">
    <location>
        <position position="183"/>
    </location>
    <ligand>
        <name>Zn(2+)</name>
        <dbReference type="ChEBI" id="CHEBI:29105"/>
        <label>2</label>
    </ligand>
</feature>
<feature type="binding site" evidence="2">
    <location>
        <position position="186"/>
    </location>
    <ligand>
        <name>Zn(2+)</name>
        <dbReference type="ChEBI" id="CHEBI:29105"/>
        <label>2</label>
    </ligand>
</feature>
<feature type="binding site" evidence="2">
    <location>
        <position position="197"/>
    </location>
    <ligand>
        <name>Zn(2+)</name>
        <dbReference type="ChEBI" id="CHEBI:29105"/>
        <label>1</label>
    </ligand>
</feature>
<feature type="binding site" evidence="2">
    <location>
        <position position="200"/>
    </location>
    <ligand>
        <name>Zn(2+)</name>
        <dbReference type="ChEBI" id="CHEBI:29105"/>
        <label>1</label>
    </ligand>
</feature>
<proteinExistence type="inferred from homology"/>
<gene>
    <name evidence="2" type="primary">dnaJ</name>
    <name type="ordered locus">c0020</name>
</gene>
<keyword id="KW-0143">Chaperone</keyword>
<keyword id="KW-0963">Cytoplasm</keyword>
<keyword id="KW-0235">DNA replication</keyword>
<keyword id="KW-0479">Metal-binding</keyword>
<keyword id="KW-1185">Reference proteome</keyword>
<keyword id="KW-0677">Repeat</keyword>
<keyword id="KW-0346">Stress response</keyword>
<keyword id="KW-0862">Zinc</keyword>
<keyword id="KW-0863">Zinc-finger</keyword>
<dbReference type="EMBL" id="AE014075">
    <property type="protein sequence ID" value="AAN78520.1"/>
    <property type="molecule type" value="Genomic_DNA"/>
</dbReference>
<dbReference type="PIR" id="G85481">
    <property type="entry name" value="G85481"/>
</dbReference>
<dbReference type="PIR" id="G90630">
    <property type="entry name" value="G90630"/>
</dbReference>
<dbReference type="RefSeq" id="WP_001118464.1">
    <property type="nucleotide sequence ID" value="NZ_CP051263.1"/>
</dbReference>
<dbReference type="SMR" id="Q8FLC5"/>
<dbReference type="MINT" id="Q8FLC5"/>
<dbReference type="STRING" id="199310.c0020"/>
<dbReference type="GeneID" id="93777428"/>
<dbReference type="KEGG" id="ecc:c0020"/>
<dbReference type="eggNOG" id="COG0484">
    <property type="taxonomic scope" value="Bacteria"/>
</dbReference>
<dbReference type="HOGENOM" id="CLU_017633_0_7_6"/>
<dbReference type="BioCyc" id="ECOL199310:C0020-MONOMER"/>
<dbReference type="Proteomes" id="UP000001410">
    <property type="component" value="Chromosome"/>
</dbReference>
<dbReference type="GO" id="GO:0005737">
    <property type="term" value="C:cytoplasm"/>
    <property type="evidence" value="ECO:0007669"/>
    <property type="project" value="UniProtKB-SubCell"/>
</dbReference>
<dbReference type="GO" id="GO:0005524">
    <property type="term" value="F:ATP binding"/>
    <property type="evidence" value="ECO:0007669"/>
    <property type="project" value="InterPro"/>
</dbReference>
<dbReference type="GO" id="GO:0031072">
    <property type="term" value="F:heat shock protein binding"/>
    <property type="evidence" value="ECO:0007669"/>
    <property type="project" value="InterPro"/>
</dbReference>
<dbReference type="GO" id="GO:0051082">
    <property type="term" value="F:unfolded protein binding"/>
    <property type="evidence" value="ECO:0007669"/>
    <property type="project" value="UniProtKB-UniRule"/>
</dbReference>
<dbReference type="GO" id="GO:0008270">
    <property type="term" value="F:zinc ion binding"/>
    <property type="evidence" value="ECO:0007669"/>
    <property type="project" value="UniProtKB-UniRule"/>
</dbReference>
<dbReference type="GO" id="GO:0051085">
    <property type="term" value="P:chaperone cofactor-dependent protein refolding"/>
    <property type="evidence" value="ECO:0007669"/>
    <property type="project" value="TreeGrafter"/>
</dbReference>
<dbReference type="GO" id="GO:0006260">
    <property type="term" value="P:DNA replication"/>
    <property type="evidence" value="ECO:0007669"/>
    <property type="project" value="UniProtKB-KW"/>
</dbReference>
<dbReference type="GO" id="GO:0042026">
    <property type="term" value="P:protein refolding"/>
    <property type="evidence" value="ECO:0007669"/>
    <property type="project" value="TreeGrafter"/>
</dbReference>
<dbReference type="GO" id="GO:0009408">
    <property type="term" value="P:response to heat"/>
    <property type="evidence" value="ECO:0007669"/>
    <property type="project" value="InterPro"/>
</dbReference>
<dbReference type="CDD" id="cd06257">
    <property type="entry name" value="DnaJ"/>
    <property type="match status" value="1"/>
</dbReference>
<dbReference type="CDD" id="cd10747">
    <property type="entry name" value="DnaJ_C"/>
    <property type="match status" value="1"/>
</dbReference>
<dbReference type="CDD" id="cd10719">
    <property type="entry name" value="DnaJ_zf"/>
    <property type="match status" value="1"/>
</dbReference>
<dbReference type="FunFam" id="1.10.287.110:FF:000003">
    <property type="entry name" value="Molecular chaperone DnaJ"/>
    <property type="match status" value="1"/>
</dbReference>
<dbReference type="FunFam" id="2.10.230.10:FF:000002">
    <property type="entry name" value="Molecular chaperone DnaJ"/>
    <property type="match status" value="1"/>
</dbReference>
<dbReference type="FunFam" id="2.60.260.20:FF:000004">
    <property type="entry name" value="Molecular chaperone DnaJ"/>
    <property type="match status" value="1"/>
</dbReference>
<dbReference type="Gene3D" id="1.10.287.110">
    <property type="entry name" value="DnaJ domain"/>
    <property type="match status" value="1"/>
</dbReference>
<dbReference type="Gene3D" id="2.10.230.10">
    <property type="entry name" value="Heat shock protein DnaJ, cysteine-rich domain"/>
    <property type="match status" value="1"/>
</dbReference>
<dbReference type="Gene3D" id="2.60.260.20">
    <property type="entry name" value="Urease metallochaperone UreE, N-terminal domain"/>
    <property type="match status" value="2"/>
</dbReference>
<dbReference type="HAMAP" id="MF_01152">
    <property type="entry name" value="DnaJ"/>
    <property type="match status" value="1"/>
</dbReference>
<dbReference type="InterPro" id="IPR012724">
    <property type="entry name" value="DnaJ"/>
</dbReference>
<dbReference type="InterPro" id="IPR002939">
    <property type="entry name" value="DnaJ_C"/>
</dbReference>
<dbReference type="InterPro" id="IPR001623">
    <property type="entry name" value="DnaJ_domain"/>
</dbReference>
<dbReference type="InterPro" id="IPR018253">
    <property type="entry name" value="DnaJ_domain_CS"/>
</dbReference>
<dbReference type="InterPro" id="IPR008971">
    <property type="entry name" value="HSP40/DnaJ_pept-bd"/>
</dbReference>
<dbReference type="InterPro" id="IPR001305">
    <property type="entry name" value="HSP_DnaJ_Cys-rich_dom"/>
</dbReference>
<dbReference type="InterPro" id="IPR036410">
    <property type="entry name" value="HSP_DnaJ_Cys-rich_dom_sf"/>
</dbReference>
<dbReference type="InterPro" id="IPR036869">
    <property type="entry name" value="J_dom_sf"/>
</dbReference>
<dbReference type="NCBIfam" id="TIGR02349">
    <property type="entry name" value="DnaJ_bact"/>
    <property type="match status" value="1"/>
</dbReference>
<dbReference type="NCBIfam" id="NF008035">
    <property type="entry name" value="PRK10767.1"/>
    <property type="match status" value="1"/>
</dbReference>
<dbReference type="PANTHER" id="PTHR43096:SF48">
    <property type="entry name" value="CHAPERONE PROTEIN DNAJ"/>
    <property type="match status" value="1"/>
</dbReference>
<dbReference type="PANTHER" id="PTHR43096">
    <property type="entry name" value="DNAJ HOMOLOG 1, MITOCHONDRIAL-RELATED"/>
    <property type="match status" value="1"/>
</dbReference>
<dbReference type="Pfam" id="PF00226">
    <property type="entry name" value="DnaJ"/>
    <property type="match status" value="1"/>
</dbReference>
<dbReference type="Pfam" id="PF01556">
    <property type="entry name" value="DnaJ_C"/>
    <property type="match status" value="1"/>
</dbReference>
<dbReference type="Pfam" id="PF00684">
    <property type="entry name" value="DnaJ_CXXCXGXG"/>
    <property type="match status" value="1"/>
</dbReference>
<dbReference type="PRINTS" id="PR00625">
    <property type="entry name" value="JDOMAIN"/>
</dbReference>
<dbReference type="SMART" id="SM00271">
    <property type="entry name" value="DnaJ"/>
    <property type="match status" value="1"/>
</dbReference>
<dbReference type="SUPFAM" id="SSF46565">
    <property type="entry name" value="Chaperone J-domain"/>
    <property type="match status" value="1"/>
</dbReference>
<dbReference type="SUPFAM" id="SSF57938">
    <property type="entry name" value="DnaJ/Hsp40 cysteine-rich domain"/>
    <property type="match status" value="1"/>
</dbReference>
<dbReference type="SUPFAM" id="SSF49493">
    <property type="entry name" value="HSP40/DnaJ peptide-binding domain"/>
    <property type="match status" value="2"/>
</dbReference>
<dbReference type="PROSITE" id="PS00636">
    <property type="entry name" value="DNAJ_1"/>
    <property type="match status" value="1"/>
</dbReference>
<dbReference type="PROSITE" id="PS50076">
    <property type="entry name" value="DNAJ_2"/>
    <property type="match status" value="1"/>
</dbReference>
<dbReference type="PROSITE" id="PS51188">
    <property type="entry name" value="ZF_CR"/>
    <property type="match status" value="1"/>
</dbReference>